<dbReference type="EMBL" id="AE017321">
    <property type="protein sequence ID" value="AAW70904.1"/>
    <property type="molecule type" value="Genomic_DNA"/>
</dbReference>
<dbReference type="RefSeq" id="WP_011256514.1">
    <property type="nucleotide sequence ID" value="NC_006833.1"/>
</dbReference>
<dbReference type="SMR" id="Q5GSX0"/>
<dbReference type="STRING" id="292805.Wbm0315"/>
<dbReference type="KEGG" id="wbm:Wbm0315"/>
<dbReference type="eggNOG" id="COG0712">
    <property type="taxonomic scope" value="Bacteria"/>
</dbReference>
<dbReference type="HOGENOM" id="CLU_085114_4_1_5"/>
<dbReference type="Proteomes" id="UP000000534">
    <property type="component" value="Chromosome"/>
</dbReference>
<dbReference type="GO" id="GO:0005886">
    <property type="term" value="C:plasma membrane"/>
    <property type="evidence" value="ECO:0007669"/>
    <property type="project" value="UniProtKB-SubCell"/>
</dbReference>
<dbReference type="GO" id="GO:0045259">
    <property type="term" value="C:proton-transporting ATP synthase complex"/>
    <property type="evidence" value="ECO:0007669"/>
    <property type="project" value="UniProtKB-KW"/>
</dbReference>
<dbReference type="GO" id="GO:0046933">
    <property type="term" value="F:proton-transporting ATP synthase activity, rotational mechanism"/>
    <property type="evidence" value="ECO:0007669"/>
    <property type="project" value="UniProtKB-UniRule"/>
</dbReference>
<dbReference type="Gene3D" id="1.10.520.20">
    <property type="entry name" value="N-terminal domain of the delta subunit of the F1F0-ATP synthase"/>
    <property type="match status" value="1"/>
</dbReference>
<dbReference type="HAMAP" id="MF_01416">
    <property type="entry name" value="ATP_synth_delta_bact"/>
    <property type="match status" value="1"/>
</dbReference>
<dbReference type="InterPro" id="IPR026015">
    <property type="entry name" value="ATP_synth_OSCP/delta_N_sf"/>
</dbReference>
<dbReference type="InterPro" id="IPR020781">
    <property type="entry name" value="ATPase_OSCP/d_CS"/>
</dbReference>
<dbReference type="InterPro" id="IPR000711">
    <property type="entry name" value="ATPase_OSCP/dsu"/>
</dbReference>
<dbReference type="NCBIfam" id="TIGR01145">
    <property type="entry name" value="ATP_synt_delta"/>
    <property type="match status" value="1"/>
</dbReference>
<dbReference type="PANTHER" id="PTHR11910">
    <property type="entry name" value="ATP SYNTHASE DELTA CHAIN"/>
    <property type="match status" value="1"/>
</dbReference>
<dbReference type="Pfam" id="PF00213">
    <property type="entry name" value="OSCP"/>
    <property type="match status" value="1"/>
</dbReference>
<dbReference type="PRINTS" id="PR00125">
    <property type="entry name" value="ATPASEDELTA"/>
</dbReference>
<dbReference type="SUPFAM" id="SSF47928">
    <property type="entry name" value="N-terminal domain of the delta subunit of the F1F0-ATP synthase"/>
    <property type="match status" value="1"/>
</dbReference>
<dbReference type="SUPFAM" id="SSF160527">
    <property type="entry name" value="V-type ATPase subunit E-like"/>
    <property type="match status" value="1"/>
</dbReference>
<dbReference type="PROSITE" id="PS00389">
    <property type="entry name" value="ATPASE_DELTA"/>
    <property type="match status" value="1"/>
</dbReference>
<name>ATPD_WOLTR</name>
<evidence type="ECO:0000255" key="1">
    <source>
        <dbReference type="HAMAP-Rule" id="MF_01416"/>
    </source>
</evidence>
<organism>
    <name type="scientific">Wolbachia sp. subsp. Brugia malayi (strain TRS)</name>
    <dbReference type="NCBI Taxonomy" id="292805"/>
    <lineage>
        <taxon>Bacteria</taxon>
        <taxon>Pseudomonadati</taxon>
        <taxon>Pseudomonadota</taxon>
        <taxon>Alphaproteobacteria</taxon>
        <taxon>Rickettsiales</taxon>
        <taxon>Anaplasmataceae</taxon>
        <taxon>Wolbachieae</taxon>
        <taxon>Wolbachia</taxon>
    </lineage>
</organism>
<accession>Q5GSX0</accession>
<protein>
    <recommendedName>
        <fullName evidence="1">ATP synthase subunit delta</fullName>
    </recommendedName>
    <alternativeName>
        <fullName evidence="1">ATP synthase F(1) sector subunit delta</fullName>
    </alternativeName>
    <alternativeName>
        <fullName evidence="1">F-type ATPase subunit delta</fullName>
        <shortName evidence="1">F-ATPase subunit delta</shortName>
    </alternativeName>
</protein>
<proteinExistence type="inferred from homology"/>
<gene>
    <name evidence="1" type="primary">atpH</name>
    <name type="ordered locus">Wbm0315</name>
</gene>
<reference key="1">
    <citation type="journal article" date="2005" name="PLoS Biol.">
        <title>The Wolbachia genome of Brugia malayi: endosymbiont evolution within a human pathogenic nematode.</title>
        <authorList>
            <person name="Foster J."/>
            <person name="Ganatra M."/>
            <person name="Kamal I."/>
            <person name="Ware J."/>
            <person name="Makarova K."/>
            <person name="Ivanova N."/>
            <person name="Bhattacharyya A."/>
            <person name="Kapatral V."/>
            <person name="Kumar S."/>
            <person name="Posfai J."/>
            <person name="Vincze T."/>
            <person name="Ingram J."/>
            <person name="Moran L."/>
            <person name="Lapidus A."/>
            <person name="Omelchenko M."/>
            <person name="Kyrpides N."/>
            <person name="Ghedin E."/>
            <person name="Wang S."/>
            <person name="Goltsman E."/>
            <person name="Joukov V."/>
            <person name="Ostrovskaya O."/>
            <person name="Tsukerman K."/>
            <person name="Mazur M."/>
            <person name="Comb D."/>
            <person name="Koonin E."/>
            <person name="Slatko B."/>
        </authorList>
    </citation>
    <scope>NUCLEOTIDE SEQUENCE [LARGE SCALE GENOMIC DNA]</scope>
    <source>
        <strain>TRS</strain>
    </source>
</reference>
<sequence length="186" mass="21285">MKRTQYNNLVSSYARALFLVSENKLSVVRKEVEFLLAFFKSQHDVFIYLSHPMISFARKKEVIFSVNEHLSESLVKFIAVIFANKRSNLLISVLEKFLTLVRESENELEITIKSAETLSESNIKIITESLSFLGKIVRVDNAVDPSILGGFIVKYGFNLIDASLKSYLDRLVDLSKVEILKTRNFI</sequence>
<keyword id="KW-0066">ATP synthesis</keyword>
<keyword id="KW-1003">Cell membrane</keyword>
<keyword id="KW-0139">CF(1)</keyword>
<keyword id="KW-0375">Hydrogen ion transport</keyword>
<keyword id="KW-0406">Ion transport</keyword>
<keyword id="KW-0472">Membrane</keyword>
<keyword id="KW-1185">Reference proteome</keyword>
<keyword id="KW-0813">Transport</keyword>
<comment type="function">
    <text evidence="1">F(1)F(0) ATP synthase produces ATP from ADP in the presence of a proton or sodium gradient. F-type ATPases consist of two structural domains, F(1) containing the extramembraneous catalytic core and F(0) containing the membrane proton channel, linked together by a central stalk and a peripheral stalk. During catalysis, ATP synthesis in the catalytic domain of F(1) is coupled via a rotary mechanism of the central stalk subunits to proton translocation.</text>
</comment>
<comment type="function">
    <text evidence="1">This protein is part of the stalk that links CF(0) to CF(1). It either transmits conformational changes from CF(0) to CF(1) or is implicated in proton conduction.</text>
</comment>
<comment type="subunit">
    <text evidence="1">F-type ATPases have 2 components, F(1) - the catalytic core - and F(0) - the membrane proton channel. F(1) has five subunits: alpha(3), beta(3), gamma(1), delta(1), epsilon(1). F(0) has three main subunits: a(1), b(2) and c(10-14). The alpha and beta chains form an alternating ring which encloses part of the gamma chain. F(1) is attached to F(0) by a central stalk formed by the gamma and epsilon chains, while a peripheral stalk is formed by the delta and b chains.</text>
</comment>
<comment type="subcellular location">
    <subcellularLocation>
        <location evidence="1">Cell membrane</location>
        <topology evidence="1">Peripheral membrane protein</topology>
    </subcellularLocation>
</comment>
<comment type="similarity">
    <text evidence="1">Belongs to the ATPase delta chain family.</text>
</comment>
<feature type="chain" id="PRO_1000184833" description="ATP synthase subunit delta">
    <location>
        <begin position="1"/>
        <end position="186"/>
    </location>
</feature>